<protein>
    <recommendedName>
        <fullName evidence="3">Hexachlorocyclohexane dehydrochlorinase 2</fullName>
        <shortName evidence="3">HCH dehydrochlorinase 2</shortName>
        <ecNumber evidence="5">4.5.1.-</ecNumber>
    </recommendedName>
</protein>
<reference key="1">
    <citation type="journal article" date="2002" name="Appl. Environ. Microbiol.">
        <title>Cloning and characterization of lin genes responsible for the degradation of hexachlorocyclohexane isomers by Sphingomonas paucimobilis strain B90.</title>
        <authorList>
            <person name="Kumari R."/>
            <person name="Subudhi S."/>
            <person name="Suar M."/>
            <person name="Dhingra G."/>
            <person name="Raina V."/>
            <person name="Dogra C."/>
            <person name="Lal S."/>
            <person name="van der Meer J.R."/>
            <person name="Holliger C."/>
            <person name="Lal R."/>
        </authorList>
    </citation>
    <scope>NUCLEOTIDE SEQUENCE [GENOMIC DNA]</scope>
    <scope>FUNCTION</scope>
    <scope>CATALYTIC ACTIVITY</scope>
    <scope>PATHWAY</scope>
    <source>
        <strain>B90</strain>
    </source>
</reference>
<reference key="2">
    <citation type="submission" date="2004-11" db="EMBL/GenBank/DDBJ databases">
        <authorList>
            <person name="Lal R."/>
            <person name="Kumari R."/>
            <person name="Subudhi S."/>
            <person name="Suar M."/>
            <person name="Dhingra G."/>
            <person name="Raina V."/>
            <person name="Dogra C."/>
            <person name="Lal S."/>
        </authorList>
    </citation>
    <scope>SEQUENCE REVISION TO N-TERMINUS</scope>
</reference>
<reference key="3">
    <citation type="journal article" date="2012" name="J. Bacteriol.">
        <title>Genome sequence of Sphingobium indicum B90A, a hexachlorocyclohexane-degrading bacterium.</title>
        <authorList>
            <person name="Anand S."/>
            <person name="Sangwan N."/>
            <person name="Lata P."/>
            <person name="Kaur J."/>
            <person name="Dua A."/>
            <person name="Singh A.K."/>
            <person name="Verma M."/>
            <person name="Kaur J."/>
            <person name="Khurana J.P."/>
            <person name="Khurana P."/>
            <person name="Mathur S."/>
            <person name="Lal R."/>
        </authorList>
    </citation>
    <scope>NUCLEOTIDE SEQUENCE [LARGE SCALE GENOMIC DNA]</scope>
    <source>
        <strain>DSM 16412 / CCM 7286 / MTCC 6364 / B90A</strain>
    </source>
</reference>
<evidence type="ECO:0000250" key="1">
    <source>
        <dbReference type="UniProtKB" id="P51697"/>
    </source>
</evidence>
<evidence type="ECO:0000269" key="2">
    <source>
    </source>
</evidence>
<evidence type="ECO:0000303" key="3">
    <source>
    </source>
</evidence>
<evidence type="ECO:0000305" key="4"/>
<evidence type="ECO:0000305" key="5">
    <source>
    </source>
</evidence>
<evidence type="ECO:0000312" key="6">
    <source>
        <dbReference type="EMBL" id="APL95055.1"/>
    </source>
</evidence>
<sequence length="156" mass="17342">MSDLDRLASRAAIQDLYSDKLIAVDKRQEGRLASIWWDDAEWTIEGIGTYKGPEGALDLANNVLWPMFHECIHYGTNLRLEFVSADKVNGIGDVLLLGNLVEGNQSILIAAVFTDEYERRDGVWKFSKRNACTNYFTPLAGIHFAPPGIHFAPSGA</sequence>
<name>LINA2_SPHIB</name>
<feature type="chain" id="PRO_0000084435" description="Hexachlorocyclohexane dehydrochlorinase 2">
    <location>
        <begin position="1"/>
        <end position="156"/>
    </location>
</feature>
<feature type="active site" evidence="1">
    <location>
        <position position="25"/>
    </location>
</feature>
<feature type="active site" description="Proton acceptor" evidence="1">
    <location>
        <position position="73"/>
    </location>
</feature>
<dbReference type="EC" id="4.5.1.-" evidence="5"/>
<dbReference type="EMBL" id="AY150580">
    <property type="protein sequence ID" value="AAN64240.2"/>
    <property type="molecule type" value="Genomic_DNA"/>
</dbReference>
<dbReference type="EMBL" id="CP013070">
    <property type="protein sequence ID" value="APL95055.1"/>
    <property type="molecule type" value="Genomic_DNA"/>
</dbReference>
<dbReference type="SMR" id="P59767"/>
<dbReference type="KEGG" id="sinb:SIDU_11350"/>
<dbReference type="BRENDA" id="4.5.1.B1">
    <property type="organism ID" value="8831"/>
</dbReference>
<dbReference type="UniPathway" id="UPA00690"/>
<dbReference type="Proteomes" id="UP000004550">
    <property type="component" value="Chromosome"/>
</dbReference>
<dbReference type="GO" id="GO:0042597">
    <property type="term" value="C:periplasmic space"/>
    <property type="evidence" value="ECO:0007669"/>
    <property type="project" value="UniProtKB-SubCell"/>
</dbReference>
<dbReference type="GO" id="GO:0016829">
    <property type="term" value="F:lyase activity"/>
    <property type="evidence" value="ECO:0007669"/>
    <property type="project" value="UniProtKB-KW"/>
</dbReference>
<dbReference type="GO" id="GO:0009636">
    <property type="term" value="P:response to toxic substance"/>
    <property type="evidence" value="ECO:0007669"/>
    <property type="project" value="UniProtKB-KW"/>
</dbReference>
<dbReference type="Gene3D" id="3.10.450.50">
    <property type="match status" value="1"/>
</dbReference>
<dbReference type="InterPro" id="IPR032710">
    <property type="entry name" value="NTF2-like_dom_sf"/>
</dbReference>
<dbReference type="InterPro" id="IPR037401">
    <property type="entry name" value="SnoaL-like"/>
</dbReference>
<dbReference type="Pfam" id="PF13577">
    <property type="entry name" value="SnoaL_4"/>
    <property type="match status" value="1"/>
</dbReference>
<dbReference type="SUPFAM" id="SSF54427">
    <property type="entry name" value="NTF2-like"/>
    <property type="match status" value="1"/>
</dbReference>
<comment type="function">
    <text evidence="1 2">Catalyzes the conversion of the important environmental pollutant gamma-hexachlorocyclohexane (gamma-HCH or lindane) to 1,3,4,6-tetrachloro-1,4-cyclohexadiene (1,4-TCDN) via gamma-pentachlorocyclohexene (gamma-PCCH) (PubMed:12450824). Proceeds by two successive 1,2-anti conformationally dependent dehydrochlorinations (By similarity). Also shows activity with alpha- and delta-HCH, giving alpha- and delta-PCCH respectively, but not with the beta isomer (PubMed:12450824).</text>
</comment>
<comment type="catalytic activity">
    <reaction evidence="1 5">
        <text>gamma-hexachlorocyclohexane = (3R,4S,5S,6R)-pentachlorocyclohexene + chloride + H(+)</text>
        <dbReference type="Rhea" id="RHEA:45480"/>
        <dbReference type="ChEBI" id="CHEBI:10576"/>
        <dbReference type="ChEBI" id="CHEBI:15378"/>
        <dbReference type="ChEBI" id="CHEBI:17996"/>
        <dbReference type="ChEBI" id="CHEBI:32888"/>
    </reaction>
</comment>
<comment type="catalytic activity">
    <reaction evidence="1">
        <text>(3R,4S,5S,6R)-pentachlorocyclohexene = (3R,6R)-1,3,4,6-tetrachlorocyclohexa-1,4-diene + chloride + H(+)</text>
        <dbReference type="Rhea" id="RHEA:12152"/>
        <dbReference type="ChEBI" id="CHEBI:10576"/>
        <dbReference type="ChEBI" id="CHEBI:15378"/>
        <dbReference type="ChEBI" id="CHEBI:17996"/>
        <dbReference type="ChEBI" id="CHEBI:18904"/>
    </reaction>
</comment>
<comment type="pathway">
    <text evidence="2">Xenobiotic degradation; hexachlorocyclohexane degradation.</text>
</comment>
<comment type="subunit">
    <text evidence="1">Homotrimer.</text>
</comment>
<comment type="subcellular location">
    <subcellularLocation>
        <location evidence="1">Periplasm</location>
    </subcellularLocation>
</comment>
<comment type="miscellaneous">
    <text evidence="1">Is not N-terminally processed during export, so it may be secreted into the periplasmic space via a hitherto unknown mechanism.</text>
</comment>
<comment type="miscellaneous">
    <text evidence="4">Gamma-hexachlorocyclohexane (lindane) is an organochlorine insecticide which has been used worldwide since the 1940s. Because of its toxicity and long persistence in soil, most countries have prohibited the use of gamma-HCH. However, many contaminated sites still remain throughout the world.</text>
</comment>
<comment type="similarity">
    <text evidence="4">Belongs to the HCH dehydrochlorinase family.</text>
</comment>
<organism>
    <name type="scientific">Sphingobium indicum (strain DSM 16412 / CCM 7286 / MTCC 6364 / B90A)</name>
    <dbReference type="NCBI Taxonomy" id="861109"/>
    <lineage>
        <taxon>Bacteria</taxon>
        <taxon>Pseudomonadati</taxon>
        <taxon>Pseudomonadota</taxon>
        <taxon>Alphaproteobacteria</taxon>
        <taxon>Sphingomonadales</taxon>
        <taxon>Sphingomonadaceae</taxon>
        <taxon>Sphingobium</taxon>
    </lineage>
</organism>
<gene>
    <name evidence="3" type="primary">linA2</name>
    <name evidence="6" type="ORF">SIDU_11350</name>
</gene>
<keyword id="KW-0216">Detoxification</keyword>
<keyword id="KW-0456">Lyase</keyword>
<keyword id="KW-0574">Periplasm</keyword>
<accession>P59767</accession>
<accession>A0A1L5BQ79</accession>
<proteinExistence type="evidence at protein level"/>